<sequence>MQPQGKMKKPTAEHMINENIPFQKVFVIGANGEKVGVLSTREAIEMAKEQRLDLVLISVQPKPIARILDYGKFKYERKKKQKAAKEKQTVIQNRQIRLTPLIGEHDLNVKARKAKEFLLDGDRIKVSLKFRGRESARPELGHKTLEKFYKAVEDLADIAKEAELVNDRFLDMYLQPNKIKVNKYRKEHNLVDKNSDSQDKSVSEEDTNEGEQ</sequence>
<protein>
    <recommendedName>
        <fullName evidence="1">Translation initiation factor IF-3</fullName>
    </recommendedName>
</protein>
<evidence type="ECO:0000255" key="1">
    <source>
        <dbReference type="HAMAP-Rule" id="MF_00080"/>
    </source>
</evidence>
<evidence type="ECO:0000256" key="2">
    <source>
        <dbReference type="SAM" id="MobiDB-lite"/>
    </source>
</evidence>
<dbReference type="EMBL" id="M95046">
    <property type="protein sequence ID" value="AAA25413.1"/>
    <property type="molecule type" value="Genomic_DNA"/>
</dbReference>
<dbReference type="PIR" id="JN0653">
    <property type="entry name" value="JN0653"/>
</dbReference>
<dbReference type="SMR" id="Q05426"/>
<dbReference type="GO" id="GO:0005829">
    <property type="term" value="C:cytosol"/>
    <property type="evidence" value="ECO:0007669"/>
    <property type="project" value="TreeGrafter"/>
</dbReference>
<dbReference type="GO" id="GO:0016020">
    <property type="term" value="C:membrane"/>
    <property type="evidence" value="ECO:0007669"/>
    <property type="project" value="TreeGrafter"/>
</dbReference>
<dbReference type="GO" id="GO:0043022">
    <property type="term" value="F:ribosome binding"/>
    <property type="evidence" value="ECO:0007669"/>
    <property type="project" value="TreeGrafter"/>
</dbReference>
<dbReference type="GO" id="GO:0003743">
    <property type="term" value="F:translation initiation factor activity"/>
    <property type="evidence" value="ECO:0007669"/>
    <property type="project" value="UniProtKB-UniRule"/>
</dbReference>
<dbReference type="GO" id="GO:0032790">
    <property type="term" value="P:ribosome disassembly"/>
    <property type="evidence" value="ECO:0007669"/>
    <property type="project" value="TreeGrafter"/>
</dbReference>
<dbReference type="Gene3D" id="3.30.110.10">
    <property type="entry name" value="Translation initiation factor 3 (IF-3), C-terminal domain"/>
    <property type="match status" value="1"/>
</dbReference>
<dbReference type="Gene3D" id="3.10.20.80">
    <property type="entry name" value="Translation initiation factor 3 (IF-3), N-terminal domain"/>
    <property type="match status" value="1"/>
</dbReference>
<dbReference type="HAMAP" id="MF_00080">
    <property type="entry name" value="IF_3"/>
    <property type="match status" value="1"/>
</dbReference>
<dbReference type="InterPro" id="IPR036788">
    <property type="entry name" value="T_IF-3_C_sf"/>
</dbReference>
<dbReference type="InterPro" id="IPR036787">
    <property type="entry name" value="T_IF-3_N_sf"/>
</dbReference>
<dbReference type="InterPro" id="IPR019813">
    <property type="entry name" value="Translation_initiation_fac3_CS"/>
</dbReference>
<dbReference type="InterPro" id="IPR001288">
    <property type="entry name" value="Translation_initiation_fac_3"/>
</dbReference>
<dbReference type="InterPro" id="IPR019815">
    <property type="entry name" value="Translation_initiation_fac_3_C"/>
</dbReference>
<dbReference type="InterPro" id="IPR019814">
    <property type="entry name" value="Translation_initiation_fac_3_N"/>
</dbReference>
<dbReference type="NCBIfam" id="TIGR00168">
    <property type="entry name" value="infC"/>
    <property type="match status" value="1"/>
</dbReference>
<dbReference type="PANTHER" id="PTHR10938">
    <property type="entry name" value="TRANSLATION INITIATION FACTOR IF-3"/>
    <property type="match status" value="1"/>
</dbReference>
<dbReference type="PANTHER" id="PTHR10938:SF0">
    <property type="entry name" value="TRANSLATION INITIATION FACTOR IF-3, MITOCHONDRIAL"/>
    <property type="match status" value="1"/>
</dbReference>
<dbReference type="Pfam" id="PF00707">
    <property type="entry name" value="IF3_C"/>
    <property type="match status" value="1"/>
</dbReference>
<dbReference type="Pfam" id="PF05198">
    <property type="entry name" value="IF3_N"/>
    <property type="match status" value="1"/>
</dbReference>
<dbReference type="SUPFAM" id="SSF55200">
    <property type="entry name" value="Translation initiation factor IF3, C-terminal domain"/>
    <property type="match status" value="1"/>
</dbReference>
<dbReference type="SUPFAM" id="SSF54364">
    <property type="entry name" value="Translation initiation factor IF3, N-terminal domain"/>
    <property type="match status" value="1"/>
</dbReference>
<dbReference type="PROSITE" id="PS00938">
    <property type="entry name" value="IF3"/>
    <property type="match status" value="1"/>
</dbReference>
<keyword id="KW-0963">Cytoplasm</keyword>
<keyword id="KW-0396">Initiation factor</keyword>
<keyword id="KW-0648">Protein biosynthesis</keyword>
<comment type="function">
    <text evidence="1">IF-3 binds to the 30S ribosomal subunit and shifts the equilibrium between 70S ribosomes and their 50S and 30S subunits in favor of the free subunits, thus enhancing the availability of 30S subunits on which protein synthesis initiation begins.</text>
</comment>
<comment type="subunit">
    <text evidence="1">Monomer.</text>
</comment>
<comment type="subcellular location">
    <subcellularLocation>
        <location evidence="1">Cytoplasm</location>
    </subcellularLocation>
</comment>
<comment type="similarity">
    <text evidence="1">Belongs to the IF-3 family.</text>
</comment>
<reference key="1">
    <citation type="journal article" date="1993" name="Gene">
        <title>Identification of a putative infC-rpmI-rplT operon flanked by long inverted repeats in Mycoplasma fermentans (incognitus strain).</title>
        <authorList>
            <person name="Hu W.S."/>
            <person name="Wang R.Y.-H."/>
            <person name="Shih J.W.-K."/>
            <person name="Lo S.-C."/>
        </authorList>
    </citation>
    <scope>NUCLEOTIDE SEQUENCE [GENOMIC DNA]</scope>
    <source>
        <strain>Incognitus</strain>
    </source>
</reference>
<gene>
    <name evidence="1" type="primary">infC</name>
</gene>
<organism>
    <name type="scientific">Mycoplasmopsis fermentans</name>
    <name type="common">Mycoplasma fermentans</name>
    <dbReference type="NCBI Taxonomy" id="2115"/>
    <lineage>
        <taxon>Bacteria</taxon>
        <taxon>Bacillati</taxon>
        <taxon>Mycoplasmatota</taxon>
        <taxon>Mycoplasmoidales</taxon>
        <taxon>Metamycoplasmataceae</taxon>
        <taxon>Mycoplasmopsis</taxon>
    </lineage>
</organism>
<name>IF3_MYCFE</name>
<feature type="chain" id="PRO_0000177540" description="Translation initiation factor IF-3">
    <location>
        <begin position="1"/>
        <end position="212"/>
    </location>
</feature>
<feature type="region of interest" description="Disordered" evidence="2">
    <location>
        <begin position="190"/>
        <end position="212"/>
    </location>
</feature>
<feature type="compositionally biased region" description="Basic and acidic residues" evidence="2">
    <location>
        <begin position="190"/>
        <end position="203"/>
    </location>
</feature>
<accession>Q05426</accession>
<proteinExistence type="inferred from homology"/>